<keyword id="KW-0067">ATP-binding</keyword>
<keyword id="KW-0997">Cell inner membrane</keyword>
<keyword id="KW-1003">Cell membrane</keyword>
<keyword id="KW-0963">Cytoplasm</keyword>
<keyword id="KW-0472">Membrane</keyword>
<keyword id="KW-0479">Metal-binding</keyword>
<keyword id="KW-0547">Nucleotide-binding</keyword>
<keyword id="KW-0653">Protein transport</keyword>
<keyword id="KW-1278">Translocase</keyword>
<keyword id="KW-0811">Translocation</keyword>
<keyword id="KW-0813">Transport</keyword>
<keyword id="KW-0862">Zinc</keyword>
<gene>
    <name evidence="1" type="primary">secA</name>
    <name type="ordered locus">ABAYE0620</name>
</gene>
<reference key="1">
    <citation type="journal article" date="2008" name="PLoS ONE">
        <title>Comparative analysis of Acinetobacters: three genomes for three lifestyles.</title>
        <authorList>
            <person name="Vallenet D."/>
            <person name="Nordmann P."/>
            <person name="Barbe V."/>
            <person name="Poirel L."/>
            <person name="Mangenot S."/>
            <person name="Bataille E."/>
            <person name="Dossat C."/>
            <person name="Gas S."/>
            <person name="Kreimeyer A."/>
            <person name="Lenoble P."/>
            <person name="Oztas S."/>
            <person name="Poulain J."/>
            <person name="Segurens B."/>
            <person name="Robert C."/>
            <person name="Abergel C."/>
            <person name="Claverie J.-M."/>
            <person name="Raoult D."/>
            <person name="Medigue C."/>
            <person name="Weissenbach J."/>
            <person name="Cruveiller S."/>
        </authorList>
    </citation>
    <scope>NUCLEOTIDE SEQUENCE [LARGE SCALE GENOMIC DNA]</scope>
    <source>
        <strain>AYE</strain>
    </source>
</reference>
<evidence type="ECO:0000255" key="1">
    <source>
        <dbReference type="HAMAP-Rule" id="MF_01382"/>
    </source>
</evidence>
<feature type="chain" id="PRO_1000144965" description="Protein translocase subunit SecA">
    <location>
        <begin position="1"/>
        <end position="907"/>
    </location>
</feature>
<feature type="binding site" evidence="1">
    <location>
        <position position="87"/>
    </location>
    <ligand>
        <name>ATP</name>
        <dbReference type="ChEBI" id="CHEBI:30616"/>
    </ligand>
</feature>
<feature type="binding site" evidence="1">
    <location>
        <begin position="105"/>
        <end position="109"/>
    </location>
    <ligand>
        <name>ATP</name>
        <dbReference type="ChEBI" id="CHEBI:30616"/>
    </ligand>
</feature>
<feature type="binding site" evidence="1">
    <location>
        <position position="510"/>
    </location>
    <ligand>
        <name>ATP</name>
        <dbReference type="ChEBI" id="CHEBI:30616"/>
    </ligand>
</feature>
<feature type="binding site" evidence="1">
    <location>
        <position position="892"/>
    </location>
    <ligand>
        <name>Zn(2+)</name>
        <dbReference type="ChEBI" id="CHEBI:29105"/>
    </ligand>
</feature>
<feature type="binding site" evidence="1">
    <location>
        <position position="894"/>
    </location>
    <ligand>
        <name>Zn(2+)</name>
        <dbReference type="ChEBI" id="CHEBI:29105"/>
    </ligand>
</feature>
<feature type="binding site" evidence="1">
    <location>
        <position position="903"/>
    </location>
    <ligand>
        <name>Zn(2+)</name>
        <dbReference type="ChEBI" id="CHEBI:29105"/>
    </ligand>
</feature>
<feature type="binding site" evidence="1">
    <location>
        <position position="904"/>
    </location>
    <ligand>
        <name>Zn(2+)</name>
        <dbReference type="ChEBI" id="CHEBI:29105"/>
    </ligand>
</feature>
<sequence>MLASLIGGIFGTKNERELKRMRKIVEQINALEPTISALSDADLSAKTPEFKQRYNNGESLDKLLPEAFAVCREAAKRVMGMRHYDVQLIGGITLHEGKIAEMRTGEGKTLMGTLACYLNALSGEGVHVITVNDYLAQRDAELNRPLFEFLGLSIGTIYSMQEPAEKAAAYLADITYGTNNEFGFDYLRDNMVFSLAEKKQRGLHYAIIDEVDSILIDEARTPLIISGQSEDSSHLYTAINTIPPKLRPQKEEKVADGGHFWIDEKQRSVEMTEIGYETVEQELIQMGLLAEGESLYSATNLNLVHHVSAAIRAHFLFQRDVHYIIHDGEVIIVDEHTGRTMPGRRWSEGLHQAVEAKEGLAIQPENQTLATTTFQNYFRLYKKLSGMTGTADTEAAEMKEIYGLDVVIIPTHRPMIRNDQNDLIYLNRNGKYNAIIQEIMNIRQQGVAPILIGTATIEASEILSSKLKQAGIHHEVLNAKQHEREADIIAQAGSPNAVTIATNMAGRGTDIILGGNWKAKLAKLENPTPEDEARLKAQWEQDHEDVLQAGGLHIIGSERHESRRIDNQLRGRAGRQGDPGVSRFYLSLEDDLMRIFAGDRVVAMMRAMGLKEDEAIEHKMVSRSIENAQRKVEARNFDIRKNLLKYDDVNNEQRKIIYSQRDEILAENTLQEYVEEMHREVMQAMIANFIPPESIHDQWDVEGLENALRIDLGIELPVQEWLEQDRRLDEEGLVERISDEVIARYRQRRAQMGDESAAMLERHFVLNSLDRHWKDHLAAMDYLRQGIHLRGYAQKNPEQEYKKEAFNLFVNMLGVIKTDVVTDLSRVHIPTPEELAEMEAQQQQQAEAMKLSFEHDDVDGLTGEVTASQEALNDSATEQQTFPVPESRNAPCPCGSGLKYKQCHGKI</sequence>
<dbReference type="EC" id="7.4.2.8" evidence="1"/>
<dbReference type="EMBL" id="CU459141">
    <property type="protein sequence ID" value="CAM85587.1"/>
    <property type="molecule type" value="Genomic_DNA"/>
</dbReference>
<dbReference type="RefSeq" id="WP_000881342.1">
    <property type="nucleotide sequence ID" value="NZ_JBDGFB010000017.1"/>
</dbReference>
<dbReference type="SMR" id="B0V514"/>
<dbReference type="EnsemblBacteria" id="CAM85587">
    <property type="protein sequence ID" value="CAM85587"/>
    <property type="gene ID" value="ABAYE0620"/>
</dbReference>
<dbReference type="KEGG" id="aby:ABAYE0620"/>
<dbReference type="HOGENOM" id="CLU_005314_3_0_6"/>
<dbReference type="GO" id="GO:0031522">
    <property type="term" value="C:cell envelope Sec protein transport complex"/>
    <property type="evidence" value="ECO:0007669"/>
    <property type="project" value="TreeGrafter"/>
</dbReference>
<dbReference type="GO" id="GO:0005829">
    <property type="term" value="C:cytosol"/>
    <property type="evidence" value="ECO:0007669"/>
    <property type="project" value="TreeGrafter"/>
</dbReference>
<dbReference type="GO" id="GO:0005886">
    <property type="term" value="C:plasma membrane"/>
    <property type="evidence" value="ECO:0007669"/>
    <property type="project" value="UniProtKB-SubCell"/>
</dbReference>
<dbReference type="GO" id="GO:0005524">
    <property type="term" value="F:ATP binding"/>
    <property type="evidence" value="ECO:0007669"/>
    <property type="project" value="UniProtKB-UniRule"/>
</dbReference>
<dbReference type="GO" id="GO:0046872">
    <property type="term" value="F:metal ion binding"/>
    <property type="evidence" value="ECO:0007669"/>
    <property type="project" value="UniProtKB-KW"/>
</dbReference>
<dbReference type="GO" id="GO:0008564">
    <property type="term" value="F:protein-exporting ATPase activity"/>
    <property type="evidence" value="ECO:0007669"/>
    <property type="project" value="UniProtKB-EC"/>
</dbReference>
<dbReference type="GO" id="GO:0065002">
    <property type="term" value="P:intracellular protein transmembrane transport"/>
    <property type="evidence" value="ECO:0007669"/>
    <property type="project" value="UniProtKB-UniRule"/>
</dbReference>
<dbReference type="GO" id="GO:0017038">
    <property type="term" value="P:protein import"/>
    <property type="evidence" value="ECO:0007669"/>
    <property type="project" value="InterPro"/>
</dbReference>
<dbReference type="GO" id="GO:0006605">
    <property type="term" value="P:protein targeting"/>
    <property type="evidence" value="ECO:0007669"/>
    <property type="project" value="UniProtKB-UniRule"/>
</dbReference>
<dbReference type="GO" id="GO:0043952">
    <property type="term" value="P:protein transport by the Sec complex"/>
    <property type="evidence" value="ECO:0007669"/>
    <property type="project" value="TreeGrafter"/>
</dbReference>
<dbReference type="CDD" id="cd17928">
    <property type="entry name" value="DEXDc_SecA"/>
    <property type="match status" value="1"/>
</dbReference>
<dbReference type="CDD" id="cd18803">
    <property type="entry name" value="SF2_C_secA"/>
    <property type="match status" value="1"/>
</dbReference>
<dbReference type="FunFam" id="3.40.50.300:FF:000113">
    <property type="entry name" value="Preprotein translocase subunit SecA"/>
    <property type="match status" value="1"/>
</dbReference>
<dbReference type="FunFam" id="3.90.1440.10:FF:000001">
    <property type="entry name" value="Preprotein translocase subunit SecA"/>
    <property type="match status" value="1"/>
</dbReference>
<dbReference type="FunFam" id="1.10.3060.10:FF:000003">
    <property type="entry name" value="Protein translocase subunit SecA"/>
    <property type="match status" value="1"/>
</dbReference>
<dbReference type="Gene3D" id="1.10.3060.10">
    <property type="entry name" value="Helical scaffold and wing domains of SecA"/>
    <property type="match status" value="1"/>
</dbReference>
<dbReference type="Gene3D" id="3.40.50.300">
    <property type="entry name" value="P-loop containing nucleotide triphosphate hydrolases"/>
    <property type="match status" value="2"/>
</dbReference>
<dbReference type="Gene3D" id="3.90.1440.10">
    <property type="entry name" value="SecA, preprotein cross-linking domain"/>
    <property type="match status" value="1"/>
</dbReference>
<dbReference type="HAMAP" id="MF_01382">
    <property type="entry name" value="SecA"/>
    <property type="match status" value="1"/>
</dbReference>
<dbReference type="InterPro" id="IPR014001">
    <property type="entry name" value="Helicase_ATP-bd"/>
</dbReference>
<dbReference type="InterPro" id="IPR001650">
    <property type="entry name" value="Helicase_C-like"/>
</dbReference>
<dbReference type="InterPro" id="IPR027417">
    <property type="entry name" value="P-loop_NTPase"/>
</dbReference>
<dbReference type="InterPro" id="IPR004027">
    <property type="entry name" value="SEC_C_motif"/>
</dbReference>
<dbReference type="InterPro" id="IPR000185">
    <property type="entry name" value="SecA"/>
</dbReference>
<dbReference type="InterPro" id="IPR020937">
    <property type="entry name" value="SecA_CS"/>
</dbReference>
<dbReference type="InterPro" id="IPR011115">
    <property type="entry name" value="SecA_DEAD"/>
</dbReference>
<dbReference type="InterPro" id="IPR014018">
    <property type="entry name" value="SecA_motor_DEAD"/>
</dbReference>
<dbReference type="InterPro" id="IPR011130">
    <property type="entry name" value="SecA_preprotein_X-link_dom"/>
</dbReference>
<dbReference type="InterPro" id="IPR044722">
    <property type="entry name" value="SecA_SF2_C"/>
</dbReference>
<dbReference type="InterPro" id="IPR011116">
    <property type="entry name" value="SecA_Wing/Scaffold"/>
</dbReference>
<dbReference type="InterPro" id="IPR036266">
    <property type="entry name" value="SecA_Wing/Scaffold_sf"/>
</dbReference>
<dbReference type="InterPro" id="IPR036670">
    <property type="entry name" value="SecA_X-link_sf"/>
</dbReference>
<dbReference type="NCBIfam" id="NF009538">
    <property type="entry name" value="PRK12904.1"/>
    <property type="match status" value="1"/>
</dbReference>
<dbReference type="NCBIfam" id="TIGR00963">
    <property type="entry name" value="secA"/>
    <property type="match status" value="1"/>
</dbReference>
<dbReference type="PANTHER" id="PTHR30612:SF0">
    <property type="entry name" value="CHLOROPLAST PROTEIN-TRANSPORTING ATPASE"/>
    <property type="match status" value="1"/>
</dbReference>
<dbReference type="PANTHER" id="PTHR30612">
    <property type="entry name" value="SECA INNER MEMBRANE COMPONENT OF SEC PROTEIN SECRETION SYSTEM"/>
    <property type="match status" value="1"/>
</dbReference>
<dbReference type="Pfam" id="PF21090">
    <property type="entry name" value="P-loop_SecA"/>
    <property type="match status" value="1"/>
</dbReference>
<dbReference type="Pfam" id="PF02810">
    <property type="entry name" value="SEC-C"/>
    <property type="match status" value="1"/>
</dbReference>
<dbReference type="Pfam" id="PF07517">
    <property type="entry name" value="SecA_DEAD"/>
    <property type="match status" value="1"/>
</dbReference>
<dbReference type="Pfam" id="PF01043">
    <property type="entry name" value="SecA_PP_bind"/>
    <property type="match status" value="1"/>
</dbReference>
<dbReference type="Pfam" id="PF07516">
    <property type="entry name" value="SecA_SW"/>
    <property type="match status" value="1"/>
</dbReference>
<dbReference type="PRINTS" id="PR00906">
    <property type="entry name" value="SECA"/>
</dbReference>
<dbReference type="SMART" id="SM00957">
    <property type="entry name" value="SecA_DEAD"/>
    <property type="match status" value="1"/>
</dbReference>
<dbReference type="SMART" id="SM00958">
    <property type="entry name" value="SecA_PP_bind"/>
    <property type="match status" value="1"/>
</dbReference>
<dbReference type="SUPFAM" id="SSF81886">
    <property type="entry name" value="Helical scaffold and wing domains of SecA"/>
    <property type="match status" value="1"/>
</dbReference>
<dbReference type="SUPFAM" id="SSF52540">
    <property type="entry name" value="P-loop containing nucleoside triphosphate hydrolases"/>
    <property type="match status" value="2"/>
</dbReference>
<dbReference type="SUPFAM" id="SSF81767">
    <property type="entry name" value="Pre-protein crosslinking domain of SecA"/>
    <property type="match status" value="1"/>
</dbReference>
<dbReference type="PROSITE" id="PS01312">
    <property type="entry name" value="SECA"/>
    <property type="match status" value="1"/>
</dbReference>
<dbReference type="PROSITE" id="PS51196">
    <property type="entry name" value="SECA_MOTOR_DEAD"/>
    <property type="match status" value="1"/>
</dbReference>
<accession>B0V514</accession>
<name>SECA_ACIBY</name>
<organism>
    <name type="scientific">Acinetobacter baumannii (strain AYE)</name>
    <dbReference type="NCBI Taxonomy" id="509173"/>
    <lineage>
        <taxon>Bacteria</taxon>
        <taxon>Pseudomonadati</taxon>
        <taxon>Pseudomonadota</taxon>
        <taxon>Gammaproteobacteria</taxon>
        <taxon>Moraxellales</taxon>
        <taxon>Moraxellaceae</taxon>
        <taxon>Acinetobacter</taxon>
        <taxon>Acinetobacter calcoaceticus/baumannii complex</taxon>
    </lineage>
</organism>
<proteinExistence type="inferred from homology"/>
<protein>
    <recommendedName>
        <fullName evidence="1">Protein translocase subunit SecA</fullName>
        <ecNumber evidence="1">7.4.2.8</ecNumber>
    </recommendedName>
</protein>
<comment type="function">
    <text evidence="1">Part of the Sec protein translocase complex. Interacts with the SecYEG preprotein conducting channel. Has a central role in coupling the hydrolysis of ATP to the transfer of proteins into and across the cell membrane, serving both as a receptor for the preprotein-SecB complex and as an ATP-driven molecular motor driving the stepwise translocation of polypeptide chains across the membrane.</text>
</comment>
<comment type="catalytic activity">
    <reaction evidence="1">
        <text>ATP + H2O + cellular proteinSide 1 = ADP + phosphate + cellular proteinSide 2.</text>
        <dbReference type="EC" id="7.4.2.8"/>
    </reaction>
</comment>
<comment type="cofactor">
    <cofactor evidence="1">
        <name>Zn(2+)</name>
        <dbReference type="ChEBI" id="CHEBI:29105"/>
    </cofactor>
    <text evidence="1">May bind 1 zinc ion per subunit.</text>
</comment>
<comment type="subunit">
    <text evidence="1">Monomer and homodimer. Part of the essential Sec protein translocation apparatus which comprises SecA, SecYEG and auxiliary proteins SecDF-YajC and YidC.</text>
</comment>
<comment type="subcellular location">
    <subcellularLocation>
        <location evidence="1">Cell inner membrane</location>
        <topology evidence="1">Peripheral membrane protein</topology>
        <orientation evidence="1">Cytoplasmic side</orientation>
    </subcellularLocation>
    <subcellularLocation>
        <location evidence="1">Cytoplasm</location>
    </subcellularLocation>
    <text evidence="1">Distribution is 50-50.</text>
</comment>
<comment type="similarity">
    <text evidence="1">Belongs to the SecA family.</text>
</comment>